<keyword id="KW-0997">Cell inner membrane</keyword>
<keyword id="KW-1003">Cell membrane</keyword>
<keyword id="KW-0472">Membrane</keyword>
<keyword id="KW-1185">Reference proteome</keyword>
<feature type="chain" id="PRO_1000065041" description="Protein Syd">
    <location>
        <begin position="1"/>
        <end position="181"/>
    </location>
</feature>
<organism>
    <name type="scientific">Cronobacter sakazakii (strain ATCC BAA-894)</name>
    <name type="common">Enterobacter sakazakii</name>
    <dbReference type="NCBI Taxonomy" id="290339"/>
    <lineage>
        <taxon>Bacteria</taxon>
        <taxon>Pseudomonadati</taxon>
        <taxon>Pseudomonadota</taxon>
        <taxon>Gammaproteobacteria</taxon>
        <taxon>Enterobacterales</taxon>
        <taxon>Enterobacteriaceae</taxon>
        <taxon>Cronobacter</taxon>
    </lineage>
</organism>
<proteinExistence type="inferred from homology"/>
<gene>
    <name evidence="1" type="primary">syd</name>
    <name type="ordered locus">ESA_00512</name>
</gene>
<protein>
    <recommendedName>
        <fullName evidence="1">Protein Syd</fullName>
    </recommendedName>
</protein>
<evidence type="ECO:0000255" key="1">
    <source>
        <dbReference type="HAMAP-Rule" id="MF_01104"/>
    </source>
</evidence>
<name>SYDP_CROS8</name>
<dbReference type="EMBL" id="CP000783">
    <property type="protein sequence ID" value="ABU75804.1"/>
    <property type="molecule type" value="Genomic_DNA"/>
</dbReference>
<dbReference type="RefSeq" id="WP_012123912.1">
    <property type="nucleotide sequence ID" value="NC_009778.1"/>
</dbReference>
<dbReference type="SMR" id="A7MR09"/>
<dbReference type="KEGG" id="esa:ESA_00512"/>
<dbReference type="PATRIC" id="fig|290339.8.peg.461"/>
<dbReference type="HOGENOM" id="CLU_121866_0_0_6"/>
<dbReference type="Proteomes" id="UP000000260">
    <property type="component" value="Chromosome"/>
</dbReference>
<dbReference type="GO" id="GO:0009898">
    <property type="term" value="C:cytoplasmic side of plasma membrane"/>
    <property type="evidence" value="ECO:0007669"/>
    <property type="project" value="InterPro"/>
</dbReference>
<dbReference type="CDD" id="cd16323">
    <property type="entry name" value="Syd"/>
    <property type="match status" value="1"/>
</dbReference>
<dbReference type="Gene3D" id="3.40.1580.20">
    <property type="entry name" value="Syd protein"/>
    <property type="match status" value="1"/>
</dbReference>
<dbReference type="HAMAP" id="MF_01104">
    <property type="entry name" value="Syd"/>
    <property type="match status" value="1"/>
</dbReference>
<dbReference type="InterPro" id="IPR009948">
    <property type="entry name" value="Syd"/>
</dbReference>
<dbReference type="InterPro" id="IPR038228">
    <property type="entry name" value="Syd_sf"/>
</dbReference>
<dbReference type="NCBIfam" id="NF003439">
    <property type="entry name" value="PRK04968.1"/>
    <property type="match status" value="1"/>
</dbReference>
<dbReference type="Pfam" id="PF07348">
    <property type="entry name" value="Syd"/>
    <property type="match status" value="1"/>
</dbReference>
<comment type="function">
    <text evidence="1">Interacts with the SecY protein in vivo. May bind preferentially to an uncomplexed state of SecY, thus functioning either as a chelating agent for excess SecY in the cell or as a regulatory factor that negatively controls the translocase function.</text>
</comment>
<comment type="subcellular location">
    <subcellularLocation>
        <location evidence="1">Cell inner membrane</location>
        <topology evidence="1">Peripheral membrane protein</topology>
        <orientation evidence="1">Cytoplasmic side</orientation>
    </subcellularLocation>
    <text evidence="1">Loosely associated with the cytoplasmic side of the inner membrane, probably via SecY.</text>
</comment>
<comment type="similarity">
    <text evidence="1">Belongs to the Syd family.</text>
</comment>
<sequence length="181" mass="20164">MQNEVQQALAAFSARYCEAWRQQRGSLPVSEEYIGISSPCIVSTHPDAVEWEPQPFTPEDSLGAVEKALDIVIQPDVHAFYASQYAGDMAARYDDVALTLLQAWSQDDFRRVQENLIGHLVTQKRLKLSPTIFIATLDSELDVISLCNLTGEVVQETLGTRKRRVLAPSLSTFLSQLTPLV</sequence>
<accession>A7MR09</accession>
<reference key="1">
    <citation type="journal article" date="2010" name="PLoS ONE">
        <title>Genome sequence of Cronobacter sakazakii BAA-894 and comparative genomic hybridization analysis with other Cronobacter species.</title>
        <authorList>
            <person name="Kucerova E."/>
            <person name="Clifton S.W."/>
            <person name="Xia X.Q."/>
            <person name="Long F."/>
            <person name="Porwollik S."/>
            <person name="Fulton L."/>
            <person name="Fronick C."/>
            <person name="Minx P."/>
            <person name="Kyung K."/>
            <person name="Warren W."/>
            <person name="Fulton R."/>
            <person name="Feng D."/>
            <person name="Wollam A."/>
            <person name="Shah N."/>
            <person name="Bhonagiri V."/>
            <person name="Nash W.E."/>
            <person name="Hallsworth-Pepin K."/>
            <person name="Wilson R.K."/>
            <person name="McClelland M."/>
            <person name="Forsythe S.J."/>
        </authorList>
    </citation>
    <scope>NUCLEOTIDE SEQUENCE [LARGE SCALE GENOMIC DNA]</scope>
    <source>
        <strain>ATCC BAA-894</strain>
    </source>
</reference>